<sequence>MAKTLYEKLFDAHVVYEAENETPLLYIDRHLVHEVTSPQAFDGLRAHGRPVRQPGKTFATMDHNVSTQTKDINACGEMARIQMQELIKNCKEFGVELYDLNHPYQGIVHVMGPEQGVTLPGMTIVCGDSHTATHGAFGALAFGIGTSEVEHVLATQTLKQGRAKTMKIEVQGKAAPGITAKDIVLAIIGKTGSAGGTGHVVEFCGEAIRDLSMEGRMTLCNMAIEMGAKAGLVAPDETTFNYVKGRLHAPKGKDFDDAVAYWKTLQTDEGATFDTVVTLQAEEISPQVTWGTNPGQVISVNDNIPDPASFADPVERASAEKALAYMGLKPGILLTEVAIDKVFIGSCTNSRIEDLRAAAEIAKGRKVAPGVQALVVPGSGPVKAQAEAEGLDKIFIEAGFEWRLPGCSMCLAMNNDRLNPGERCASTSNRNFEGRQGRGGRTHLVSPAMAAAAAVTGHFADIRNIK</sequence>
<feature type="initiator methionine" description="Removed" evidence="1">
    <location>
        <position position="1"/>
    </location>
</feature>
<feature type="chain" id="PRO_0000076746" description="3-isopropylmalate dehydratase large subunit">
    <location>
        <begin position="2"/>
        <end position="466"/>
    </location>
</feature>
<feature type="binding site" evidence="2">
    <location>
        <position position="347"/>
    </location>
    <ligand>
        <name>[4Fe-4S] cluster</name>
        <dbReference type="ChEBI" id="CHEBI:49883"/>
    </ligand>
</feature>
<feature type="binding site" evidence="2">
    <location>
        <position position="407"/>
    </location>
    <ligand>
        <name>[4Fe-4S] cluster</name>
        <dbReference type="ChEBI" id="CHEBI:49883"/>
    </ligand>
</feature>
<feature type="binding site" evidence="2">
    <location>
        <position position="410"/>
    </location>
    <ligand>
        <name>[4Fe-4S] cluster</name>
        <dbReference type="ChEBI" id="CHEBI:49883"/>
    </ligand>
</feature>
<name>LEUC_ECO57</name>
<comment type="function">
    <text evidence="2">Catalyzes the isomerization between 2-isopropylmalate and 3-isopropylmalate, via the formation of 2-isopropylmaleate.</text>
</comment>
<comment type="catalytic activity">
    <reaction evidence="2">
        <text>(2R,3S)-3-isopropylmalate = (2S)-2-isopropylmalate</text>
        <dbReference type="Rhea" id="RHEA:32287"/>
        <dbReference type="ChEBI" id="CHEBI:1178"/>
        <dbReference type="ChEBI" id="CHEBI:35121"/>
        <dbReference type="EC" id="4.2.1.33"/>
    </reaction>
</comment>
<comment type="cofactor">
    <cofactor evidence="2">
        <name>[4Fe-4S] cluster</name>
        <dbReference type="ChEBI" id="CHEBI:49883"/>
    </cofactor>
    <text evidence="2">Binds 1 [4Fe-4S] cluster per subunit.</text>
</comment>
<comment type="pathway">
    <text evidence="2">Amino-acid biosynthesis; L-leucine biosynthesis; L-leucine from 3-methyl-2-oxobutanoate: step 2/4.</text>
</comment>
<comment type="subunit">
    <text evidence="2">Heterodimer of LeuC and LeuD.</text>
</comment>
<comment type="similarity">
    <text evidence="2">Belongs to the aconitase/IPM isomerase family. LeuC type 1 subfamily.</text>
</comment>
<gene>
    <name evidence="2" type="primary">leuC</name>
    <name type="ordered locus">Z0081</name>
    <name type="ordered locus">ECs0076</name>
</gene>
<dbReference type="EC" id="4.2.1.33" evidence="2"/>
<dbReference type="EMBL" id="AE005174">
    <property type="protein sequence ID" value="AAG54376.1"/>
    <property type="molecule type" value="Genomic_DNA"/>
</dbReference>
<dbReference type="EMBL" id="BA000007">
    <property type="protein sequence ID" value="BAB33499.1"/>
    <property type="molecule type" value="Genomic_DNA"/>
</dbReference>
<dbReference type="PIR" id="D85489">
    <property type="entry name" value="D85489"/>
</dbReference>
<dbReference type="PIR" id="D90638">
    <property type="entry name" value="D90638"/>
</dbReference>
<dbReference type="RefSeq" id="NP_308103.1">
    <property type="nucleotide sequence ID" value="NC_002695.1"/>
</dbReference>
<dbReference type="RefSeq" id="WP_001140649.1">
    <property type="nucleotide sequence ID" value="NZ_VOAI01000002.1"/>
</dbReference>
<dbReference type="SMR" id="Q8XA00"/>
<dbReference type="STRING" id="155864.Z0081"/>
<dbReference type="GeneID" id="913504"/>
<dbReference type="KEGG" id="ece:Z0081"/>
<dbReference type="KEGG" id="ecs:ECs_0076"/>
<dbReference type="PATRIC" id="fig|386585.9.peg.176"/>
<dbReference type="eggNOG" id="COG0065">
    <property type="taxonomic scope" value="Bacteria"/>
</dbReference>
<dbReference type="HOGENOM" id="CLU_006714_3_4_6"/>
<dbReference type="OMA" id="WDDHVVR"/>
<dbReference type="UniPathway" id="UPA00048">
    <property type="reaction ID" value="UER00071"/>
</dbReference>
<dbReference type="Proteomes" id="UP000000558">
    <property type="component" value="Chromosome"/>
</dbReference>
<dbReference type="Proteomes" id="UP000002519">
    <property type="component" value="Chromosome"/>
</dbReference>
<dbReference type="GO" id="GO:0003861">
    <property type="term" value="F:3-isopropylmalate dehydratase activity"/>
    <property type="evidence" value="ECO:0007669"/>
    <property type="project" value="UniProtKB-UniRule"/>
</dbReference>
<dbReference type="GO" id="GO:0051539">
    <property type="term" value="F:4 iron, 4 sulfur cluster binding"/>
    <property type="evidence" value="ECO:0007669"/>
    <property type="project" value="UniProtKB-KW"/>
</dbReference>
<dbReference type="GO" id="GO:0046872">
    <property type="term" value="F:metal ion binding"/>
    <property type="evidence" value="ECO:0007669"/>
    <property type="project" value="UniProtKB-KW"/>
</dbReference>
<dbReference type="GO" id="GO:0009098">
    <property type="term" value="P:L-leucine biosynthetic process"/>
    <property type="evidence" value="ECO:0007669"/>
    <property type="project" value="UniProtKB-UniRule"/>
</dbReference>
<dbReference type="CDD" id="cd01583">
    <property type="entry name" value="IPMI"/>
    <property type="match status" value="1"/>
</dbReference>
<dbReference type="FunFam" id="3.30.499.10:FF:000006">
    <property type="entry name" value="3-isopropylmalate dehydratase large subunit"/>
    <property type="match status" value="1"/>
</dbReference>
<dbReference type="FunFam" id="3.30.499.10:FF:000007">
    <property type="entry name" value="3-isopropylmalate dehydratase large subunit"/>
    <property type="match status" value="1"/>
</dbReference>
<dbReference type="Gene3D" id="3.30.499.10">
    <property type="entry name" value="Aconitase, domain 3"/>
    <property type="match status" value="2"/>
</dbReference>
<dbReference type="HAMAP" id="MF_01026">
    <property type="entry name" value="LeuC_type1"/>
    <property type="match status" value="1"/>
</dbReference>
<dbReference type="InterPro" id="IPR004430">
    <property type="entry name" value="3-IsopropMal_deHydase_lsu"/>
</dbReference>
<dbReference type="InterPro" id="IPR015931">
    <property type="entry name" value="Acnase/IPM_dHydase_lsu_aba_1/3"/>
</dbReference>
<dbReference type="InterPro" id="IPR001030">
    <property type="entry name" value="Acoase/IPM_deHydtase_lsu_aba"/>
</dbReference>
<dbReference type="InterPro" id="IPR018136">
    <property type="entry name" value="Aconitase_4Fe-4S_BS"/>
</dbReference>
<dbReference type="InterPro" id="IPR036008">
    <property type="entry name" value="Aconitase_4Fe-4S_dom"/>
</dbReference>
<dbReference type="InterPro" id="IPR050067">
    <property type="entry name" value="IPM_dehydratase_rel_enz"/>
</dbReference>
<dbReference type="InterPro" id="IPR033941">
    <property type="entry name" value="IPMI_cat"/>
</dbReference>
<dbReference type="NCBIfam" id="TIGR00170">
    <property type="entry name" value="leuC"/>
    <property type="match status" value="1"/>
</dbReference>
<dbReference type="NCBIfam" id="NF004016">
    <property type="entry name" value="PRK05478.1"/>
    <property type="match status" value="1"/>
</dbReference>
<dbReference type="NCBIfam" id="NF009116">
    <property type="entry name" value="PRK12466.1"/>
    <property type="match status" value="1"/>
</dbReference>
<dbReference type="PANTHER" id="PTHR43822:SF9">
    <property type="entry name" value="3-ISOPROPYLMALATE DEHYDRATASE"/>
    <property type="match status" value="1"/>
</dbReference>
<dbReference type="PANTHER" id="PTHR43822">
    <property type="entry name" value="HOMOACONITASE, MITOCHONDRIAL-RELATED"/>
    <property type="match status" value="1"/>
</dbReference>
<dbReference type="Pfam" id="PF00330">
    <property type="entry name" value="Aconitase"/>
    <property type="match status" value="1"/>
</dbReference>
<dbReference type="PRINTS" id="PR00415">
    <property type="entry name" value="ACONITASE"/>
</dbReference>
<dbReference type="SUPFAM" id="SSF53732">
    <property type="entry name" value="Aconitase iron-sulfur domain"/>
    <property type="match status" value="1"/>
</dbReference>
<dbReference type="PROSITE" id="PS00450">
    <property type="entry name" value="ACONITASE_1"/>
    <property type="match status" value="1"/>
</dbReference>
<dbReference type="PROSITE" id="PS01244">
    <property type="entry name" value="ACONITASE_2"/>
    <property type="match status" value="1"/>
</dbReference>
<reference key="1">
    <citation type="journal article" date="2001" name="Nature">
        <title>Genome sequence of enterohaemorrhagic Escherichia coli O157:H7.</title>
        <authorList>
            <person name="Perna N.T."/>
            <person name="Plunkett G. III"/>
            <person name="Burland V."/>
            <person name="Mau B."/>
            <person name="Glasner J.D."/>
            <person name="Rose D.J."/>
            <person name="Mayhew G.F."/>
            <person name="Evans P.S."/>
            <person name="Gregor J."/>
            <person name="Kirkpatrick H.A."/>
            <person name="Posfai G."/>
            <person name="Hackett J."/>
            <person name="Klink S."/>
            <person name="Boutin A."/>
            <person name="Shao Y."/>
            <person name="Miller L."/>
            <person name="Grotbeck E.J."/>
            <person name="Davis N.W."/>
            <person name="Lim A."/>
            <person name="Dimalanta E.T."/>
            <person name="Potamousis K."/>
            <person name="Apodaca J."/>
            <person name="Anantharaman T.S."/>
            <person name="Lin J."/>
            <person name="Yen G."/>
            <person name="Schwartz D.C."/>
            <person name="Welch R.A."/>
            <person name="Blattner F.R."/>
        </authorList>
    </citation>
    <scope>NUCLEOTIDE SEQUENCE [LARGE SCALE GENOMIC DNA]</scope>
    <source>
        <strain>O157:H7 / EDL933 / ATCC 700927 / EHEC</strain>
    </source>
</reference>
<reference key="2">
    <citation type="journal article" date="2001" name="DNA Res.">
        <title>Complete genome sequence of enterohemorrhagic Escherichia coli O157:H7 and genomic comparison with a laboratory strain K-12.</title>
        <authorList>
            <person name="Hayashi T."/>
            <person name="Makino K."/>
            <person name="Ohnishi M."/>
            <person name="Kurokawa K."/>
            <person name="Ishii K."/>
            <person name="Yokoyama K."/>
            <person name="Han C.-G."/>
            <person name="Ohtsubo E."/>
            <person name="Nakayama K."/>
            <person name="Murata T."/>
            <person name="Tanaka M."/>
            <person name="Tobe T."/>
            <person name="Iida T."/>
            <person name="Takami H."/>
            <person name="Honda T."/>
            <person name="Sasakawa C."/>
            <person name="Ogasawara N."/>
            <person name="Yasunaga T."/>
            <person name="Kuhara S."/>
            <person name="Shiba T."/>
            <person name="Hattori M."/>
            <person name="Shinagawa H."/>
        </authorList>
    </citation>
    <scope>NUCLEOTIDE SEQUENCE [LARGE SCALE GENOMIC DNA]</scope>
    <source>
        <strain>O157:H7 / Sakai / RIMD 0509952 / EHEC</strain>
    </source>
</reference>
<organism>
    <name type="scientific">Escherichia coli O157:H7</name>
    <dbReference type="NCBI Taxonomy" id="83334"/>
    <lineage>
        <taxon>Bacteria</taxon>
        <taxon>Pseudomonadati</taxon>
        <taxon>Pseudomonadota</taxon>
        <taxon>Gammaproteobacteria</taxon>
        <taxon>Enterobacterales</taxon>
        <taxon>Enterobacteriaceae</taxon>
        <taxon>Escherichia</taxon>
    </lineage>
</organism>
<proteinExistence type="inferred from homology"/>
<protein>
    <recommendedName>
        <fullName evidence="2">3-isopropylmalate dehydratase large subunit</fullName>
        <ecNumber evidence="2">4.2.1.33</ecNumber>
    </recommendedName>
    <alternativeName>
        <fullName evidence="2">Alpha-IPM isomerase</fullName>
        <shortName evidence="2">IPMI</shortName>
    </alternativeName>
    <alternativeName>
        <fullName evidence="2">Isopropylmalate isomerase</fullName>
    </alternativeName>
</protein>
<evidence type="ECO:0000250" key="1"/>
<evidence type="ECO:0000255" key="2">
    <source>
        <dbReference type="HAMAP-Rule" id="MF_01026"/>
    </source>
</evidence>
<keyword id="KW-0004">4Fe-4S</keyword>
<keyword id="KW-0028">Amino-acid biosynthesis</keyword>
<keyword id="KW-0100">Branched-chain amino acid biosynthesis</keyword>
<keyword id="KW-0408">Iron</keyword>
<keyword id="KW-0411">Iron-sulfur</keyword>
<keyword id="KW-0432">Leucine biosynthesis</keyword>
<keyword id="KW-0456">Lyase</keyword>
<keyword id="KW-0479">Metal-binding</keyword>
<keyword id="KW-1185">Reference proteome</keyword>
<accession>Q8XA00</accession>